<dbReference type="EMBL" id="AM406671">
    <property type="protein sequence ID" value="CAL98579.1"/>
    <property type="molecule type" value="Genomic_DNA"/>
</dbReference>
<dbReference type="RefSeq" id="WP_011835738.1">
    <property type="nucleotide sequence ID" value="NC_009004.1"/>
</dbReference>
<dbReference type="SMR" id="A2RMP5"/>
<dbReference type="STRING" id="416870.llmg_2011"/>
<dbReference type="KEGG" id="llm:llmg_2011"/>
<dbReference type="eggNOG" id="COG1113">
    <property type="taxonomic scope" value="Bacteria"/>
</dbReference>
<dbReference type="HOGENOM" id="CLU_007946_9_3_9"/>
<dbReference type="OrthoDB" id="9780162at2"/>
<dbReference type="PhylomeDB" id="A2RMP5"/>
<dbReference type="Proteomes" id="UP000000364">
    <property type="component" value="Chromosome"/>
</dbReference>
<dbReference type="GO" id="GO:0005886">
    <property type="term" value="C:plasma membrane"/>
    <property type="evidence" value="ECO:0007669"/>
    <property type="project" value="UniProtKB-SubCell"/>
</dbReference>
<dbReference type="GO" id="GO:0006865">
    <property type="term" value="P:amino acid transport"/>
    <property type="evidence" value="ECO:0007669"/>
    <property type="project" value="UniProtKB-KW"/>
</dbReference>
<dbReference type="GO" id="GO:0055085">
    <property type="term" value="P:transmembrane transport"/>
    <property type="evidence" value="ECO:0007669"/>
    <property type="project" value="InterPro"/>
</dbReference>
<dbReference type="Gene3D" id="1.20.1740.10">
    <property type="entry name" value="Amino acid/polyamine transporter I"/>
    <property type="match status" value="1"/>
</dbReference>
<dbReference type="InterPro" id="IPR004841">
    <property type="entry name" value="AA-permease/SLC12A_dom"/>
</dbReference>
<dbReference type="PANTHER" id="PTHR43495">
    <property type="entry name" value="GABA PERMEASE"/>
    <property type="match status" value="1"/>
</dbReference>
<dbReference type="PANTHER" id="PTHR43495:SF5">
    <property type="entry name" value="GAMMA-AMINOBUTYRIC ACID PERMEASE"/>
    <property type="match status" value="1"/>
</dbReference>
<dbReference type="Pfam" id="PF00324">
    <property type="entry name" value="AA_permease"/>
    <property type="match status" value="1"/>
</dbReference>
<dbReference type="PIRSF" id="PIRSF006060">
    <property type="entry name" value="AA_transporter"/>
    <property type="match status" value="1"/>
</dbReference>
<protein>
    <recommendedName>
        <fullName evidence="4">Aromatic amino acid permease FywP</fullName>
    </recommendedName>
</protein>
<evidence type="ECO:0000255" key="1"/>
<evidence type="ECO:0000269" key="2">
    <source>
    </source>
</evidence>
<evidence type="ECO:0000303" key="3">
    <source>
    </source>
</evidence>
<evidence type="ECO:0000305" key="4"/>
<evidence type="ECO:0000312" key="5">
    <source>
        <dbReference type="EMBL" id="CAL98579.1"/>
    </source>
</evidence>
<gene>
    <name evidence="3" type="primary">fywP</name>
    <name evidence="5" type="ordered locus">llmg_2011</name>
</gene>
<reference key="1">
    <citation type="journal article" date="2007" name="J. Bacteriol.">
        <title>The complete genome sequence of the lactic acid bacterial paradigm Lactococcus lactis subsp. cremoris MG1363.</title>
        <authorList>
            <person name="Wegmann U."/>
            <person name="O'Connell-Motherway M."/>
            <person name="Zomer A."/>
            <person name="Buist G."/>
            <person name="Shearman C."/>
            <person name="Canchaya C."/>
            <person name="Ventura M."/>
            <person name="Goesmann A."/>
            <person name="Gasson M.J."/>
            <person name="Kuipers O.P."/>
            <person name="van Sinderen D."/>
            <person name="Kok J."/>
        </authorList>
    </citation>
    <scope>NUCLEOTIDE SEQUENCE [LARGE SCALE GENOMIC DNA]</scope>
    <source>
        <strain>MG1363</strain>
    </source>
</reference>
<reference key="2">
    <citation type="journal article" date="2013" name="J. Bacteriol.">
        <title>Cloning, expression, and functional characterization of secondary amino acid transporters of Lactococcus lactis.</title>
        <authorList>
            <person name="Trip H."/>
            <person name="Mulder N.L."/>
            <person name="Lolkema J.S."/>
        </authorList>
    </citation>
    <scope>FUNCTION</scope>
    <scope>DISRUPTION PHENOTYPE</scope>
    <source>
        <strain>MG1363</strain>
    </source>
</reference>
<proteinExistence type="inferred from homology"/>
<feature type="chain" id="PRO_0000442539" description="Aromatic amino acid permease FywP">
    <location>
        <begin position="1"/>
        <end position="457"/>
    </location>
</feature>
<feature type="transmembrane region" description="Helical" evidence="1">
    <location>
        <begin position="16"/>
        <end position="36"/>
    </location>
</feature>
<feature type="transmembrane region" description="Helical" evidence="1">
    <location>
        <begin position="43"/>
        <end position="63"/>
    </location>
</feature>
<feature type="transmembrane region" description="Helical" evidence="1">
    <location>
        <begin position="91"/>
        <end position="111"/>
    </location>
</feature>
<feature type="transmembrane region" description="Helical" evidence="1">
    <location>
        <begin position="114"/>
        <end position="134"/>
    </location>
</feature>
<feature type="transmembrane region" description="Helical" evidence="1">
    <location>
        <begin position="154"/>
        <end position="174"/>
    </location>
</feature>
<feature type="transmembrane region" description="Helical" evidence="1">
    <location>
        <begin position="205"/>
        <end position="225"/>
    </location>
</feature>
<feature type="transmembrane region" description="Helical" evidence="1">
    <location>
        <begin position="243"/>
        <end position="263"/>
    </location>
</feature>
<feature type="transmembrane region" description="Helical" evidence="1">
    <location>
        <begin position="292"/>
        <end position="312"/>
    </location>
</feature>
<feature type="transmembrane region" description="Helical" evidence="1">
    <location>
        <begin position="342"/>
        <end position="362"/>
    </location>
</feature>
<feature type="transmembrane region" description="Helical" evidence="1">
    <location>
        <begin position="373"/>
        <end position="393"/>
    </location>
</feature>
<feature type="transmembrane region" description="Helical" evidence="1">
    <location>
        <begin position="403"/>
        <end position="423"/>
    </location>
</feature>
<feature type="transmembrane region" description="Helical" evidence="1">
    <location>
        <begin position="424"/>
        <end position="444"/>
    </location>
</feature>
<organism>
    <name type="scientific">Lactococcus lactis subsp. cremoris (strain MG1363)</name>
    <dbReference type="NCBI Taxonomy" id="416870"/>
    <lineage>
        <taxon>Bacteria</taxon>
        <taxon>Bacillati</taxon>
        <taxon>Bacillota</taxon>
        <taxon>Bacilli</taxon>
        <taxon>Lactobacillales</taxon>
        <taxon>Streptococcaceae</taxon>
        <taxon>Lactococcus</taxon>
        <taxon>Lactococcus cremoris subsp. cremoris</taxon>
    </lineage>
</organism>
<accession>A2RMP5</accession>
<keyword id="KW-0029">Amino-acid transport</keyword>
<keyword id="KW-1003">Cell membrane</keyword>
<keyword id="KW-0472">Membrane</keyword>
<keyword id="KW-0812">Transmembrane</keyword>
<keyword id="KW-1133">Transmembrane helix</keyword>
<keyword id="KW-0813">Transport</keyword>
<comment type="function">
    <text evidence="2">Involved in phenylalanine and tyrosine uptake. Also has affinity for tryptophan. Plays no significant role in the excretion of accumulated phenylalanine.</text>
</comment>
<comment type="subcellular location">
    <subcellularLocation>
        <location evidence="4">Cell membrane</location>
        <topology evidence="1">Multi-pass membrane protein</topology>
    </subcellularLocation>
</comment>
<comment type="disruption phenotype">
    <text evidence="2">Deletion of the gene reduces the efficiency of growth at low concentrations of the aromatic amino acids.</text>
</comment>
<comment type="similarity">
    <text evidence="4">Belongs to the amino acid-polyamine-organocation (APC) superfamily. Amino acid transporter (AAT) (TC 2.A.3.1) family.</text>
</comment>
<name>FYWP_LACLM</name>
<sequence>MENSTGLKSSLKTRHIVMLSLGGAIGSGLFLGSGKVIAQAGPSVLLSYVLAGLTLYVVMYGVGKMVIHQDDHKAGMAGVVAPFIGDHWAHFADWVYWATWMAVLIAEEAGVSTFLAILIPGVPLWVFALVVAVLGTAINLWSVKAFAETEYWLAFIKVAVILLLIALGIYLLVINDAHLGFVADSAQKVTTKSTAPSFAPNGFSGFLTSLLVVIFSFGGSELAAITVAETENPKVAIPRAIRGVLIRIISFYVIPIFLFLHLLPWSEVSNPDAASPFATIFARVGIPHADKIVLVIIVIAIFSAVNSAIYATSRSLYSRIQGSSTYVGKKLGKLSKNQVPTNAILVSSFVLFIGVLLSAVLGDGFWQFVAGSISFTISIVWILLLVAALVLYFKHKEVTNWFVKLATLVVLIALSLVFIMQIITNPWTLSVFALVICLLSYFSYRKKKSIIEKTFIL</sequence>